<name>SYC_JANMA</name>
<organism>
    <name type="scientific">Janthinobacterium sp. (strain Marseille)</name>
    <name type="common">Minibacterium massiliensis</name>
    <dbReference type="NCBI Taxonomy" id="375286"/>
    <lineage>
        <taxon>Bacteria</taxon>
        <taxon>Pseudomonadati</taxon>
        <taxon>Pseudomonadota</taxon>
        <taxon>Betaproteobacteria</taxon>
        <taxon>Burkholderiales</taxon>
        <taxon>Oxalobacteraceae</taxon>
        <taxon>Janthinobacterium</taxon>
    </lineage>
</organism>
<dbReference type="EC" id="6.1.1.16" evidence="1"/>
<dbReference type="EMBL" id="CP000269">
    <property type="protein sequence ID" value="ABR88513.1"/>
    <property type="molecule type" value="Genomic_DNA"/>
</dbReference>
<dbReference type="RefSeq" id="WP_012079961.1">
    <property type="nucleotide sequence ID" value="NC_009659.1"/>
</dbReference>
<dbReference type="SMR" id="A6SZV1"/>
<dbReference type="STRING" id="375286.mma_2108"/>
<dbReference type="KEGG" id="mms:mma_2108"/>
<dbReference type="eggNOG" id="COG0215">
    <property type="taxonomic scope" value="Bacteria"/>
</dbReference>
<dbReference type="HOGENOM" id="CLU_013528_0_1_4"/>
<dbReference type="OrthoDB" id="9815130at2"/>
<dbReference type="Proteomes" id="UP000006388">
    <property type="component" value="Chromosome"/>
</dbReference>
<dbReference type="GO" id="GO:0005829">
    <property type="term" value="C:cytosol"/>
    <property type="evidence" value="ECO:0007669"/>
    <property type="project" value="TreeGrafter"/>
</dbReference>
<dbReference type="GO" id="GO:0005524">
    <property type="term" value="F:ATP binding"/>
    <property type="evidence" value="ECO:0007669"/>
    <property type="project" value="UniProtKB-UniRule"/>
</dbReference>
<dbReference type="GO" id="GO:0004817">
    <property type="term" value="F:cysteine-tRNA ligase activity"/>
    <property type="evidence" value="ECO:0007669"/>
    <property type="project" value="UniProtKB-UniRule"/>
</dbReference>
<dbReference type="GO" id="GO:0008270">
    <property type="term" value="F:zinc ion binding"/>
    <property type="evidence" value="ECO:0007669"/>
    <property type="project" value="UniProtKB-UniRule"/>
</dbReference>
<dbReference type="GO" id="GO:0006423">
    <property type="term" value="P:cysteinyl-tRNA aminoacylation"/>
    <property type="evidence" value="ECO:0007669"/>
    <property type="project" value="UniProtKB-UniRule"/>
</dbReference>
<dbReference type="CDD" id="cd07963">
    <property type="entry name" value="Anticodon_Ia_Cys"/>
    <property type="match status" value="1"/>
</dbReference>
<dbReference type="CDD" id="cd00672">
    <property type="entry name" value="CysRS_core"/>
    <property type="match status" value="1"/>
</dbReference>
<dbReference type="FunFam" id="3.40.50.620:FF:000009">
    <property type="entry name" value="Cysteine--tRNA ligase"/>
    <property type="match status" value="1"/>
</dbReference>
<dbReference type="Gene3D" id="1.20.120.1910">
    <property type="entry name" value="Cysteine-tRNA ligase, C-terminal anti-codon recognition domain"/>
    <property type="match status" value="1"/>
</dbReference>
<dbReference type="Gene3D" id="3.40.50.620">
    <property type="entry name" value="HUPs"/>
    <property type="match status" value="1"/>
</dbReference>
<dbReference type="HAMAP" id="MF_00041">
    <property type="entry name" value="Cys_tRNA_synth"/>
    <property type="match status" value="1"/>
</dbReference>
<dbReference type="InterPro" id="IPR015803">
    <property type="entry name" value="Cys-tRNA-ligase"/>
</dbReference>
<dbReference type="InterPro" id="IPR015273">
    <property type="entry name" value="Cys-tRNA-synt_Ia_DALR"/>
</dbReference>
<dbReference type="InterPro" id="IPR024909">
    <property type="entry name" value="Cys-tRNA/MSH_ligase"/>
</dbReference>
<dbReference type="InterPro" id="IPR014729">
    <property type="entry name" value="Rossmann-like_a/b/a_fold"/>
</dbReference>
<dbReference type="InterPro" id="IPR032678">
    <property type="entry name" value="tRNA-synt_1_cat_dom"/>
</dbReference>
<dbReference type="InterPro" id="IPR009080">
    <property type="entry name" value="tRNAsynth_Ia_anticodon-bd"/>
</dbReference>
<dbReference type="NCBIfam" id="TIGR00435">
    <property type="entry name" value="cysS"/>
    <property type="match status" value="1"/>
</dbReference>
<dbReference type="PANTHER" id="PTHR10890:SF3">
    <property type="entry name" value="CYSTEINE--TRNA LIGASE, CYTOPLASMIC"/>
    <property type="match status" value="1"/>
</dbReference>
<dbReference type="PANTHER" id="PTHR10890">
    <property type="entry name" value="CYSTEINYL-TRNA SYNTHETASE"/>
    <property type="match status" value="1"/>
</dbReference>
<dbReference type="Pfam" id="PF09190">
    <property type="entry name" value="DALR_2"/>
    <property type="match status" value="1"/>
</dbReference>
<dbReference type="Pfam" id="PF01406">
    <property type="entry name" value="tRNA-synt_1e"/>
    <property type="match status" value="1"/>
</dbReference>
<dbReference type="PRINTS" id="PR00983">
    <property type="entry name" value="TRNASYNTHCYS"/>
</dbReference>
<dbReference type="SMART" id="SM00840">
    <property type="entry name" value="DALR_2"/>
    <property type="match status" value="1"/>
</dbReference>
<dbReference type="SUPFAM" id="SSF47323">
    <property type="entry name" value="Anticodon-binding domain of a subclass of class I aminoacyl-tRNA synthetases"/>
    <property type="match status" value="1"/>
</dbReference>
<dbReference type="SUPFAM" id="SSF52374">
    <property type="entry name" value="Nucleotidylyl transferase"/>
    <property type="match status" value="1"/>
</dbReference>
<accession>A6SZV1</accession>
<reference key="1">
    <citation type="journal article" date="2007" name="PLoS Genet.">
        <title>Genome analysis of Minibacterium massiliensis highlights the convergent evolution of water-living bacteria.</title>
        <authorList>
            <person name="Audic S."/>
            <person name="Robert C."/>
            <person name="Campagna B."/>
            <person name="Parinello H."/>
            <person name="Claverie J.-M."/>
            <person name="Raoult D."/>
            <person name="Drancourt M."/>
        </authorList>
    </citation>
    <scope>NUCLEOTIDE SEQUENCE [LARGE SCALE GENOMIC DNA]</scope>
    <source>
        <strain>Marseille</strain>
    </source>
</reference>
<protein>
    <recommendedName>
        <fullName evidence="1">Cysteine--tRNA ligase</fullName>
        <ecNumber evidence="1">6.1.1.16</ecNumber>
    </recommendedName>
    <alternativeName>
        <fullName evidence="1">Cysteinyl-tRNA synthetase</fullName>
        <shortName evidence="1">CysRS</shortName>
    </alternativeName>
</protein>
<comment type="catalytic activity">
    <reaction evidence="1">
        <text>tRNA(Cys) + L-cysteine + ATP = L-cysteinyl-tRNA(Cys) + AMP + diphosphate</text>
        <dbReference type="Rhea" id="RHEA:17773"/>
        <dbReference type="Rhea" id="RHEA-COMP:9661"/>
        <dbReference type="Rhea" id="RHEA-COMP:9679"/>
        <dbReference type="ChEBI" id="CHEBI:30616"/>
        <dbReference type="ChEBI" id="CHEBI:33019"/>
        <dbReference type="ChEBI" id="CHEBI:35235"/>
        <dbReference type="ChEBI" id="CHEBI:78442"/>
        <dbReference type="ChEBI" id="CHEBI:78517"/>
        <dbReference type="ChEBI" id="CHEBI:456215"/>
        <dbReference type="EC" id="6.1.1.16"/>
    </reaction>
</comment>
<comment type="cofactor">
    <cofactor evidence="1">
        <name>Zn(2+)</name>
        <dbReference type="ChEBI" id="CHEBI:29105"/>
    </cofactor>
    <text evidence="1">Binds 1 zinc ion per subunit.</text>
</comment>
<comment type="subunit">
    <text evidence="1">Monomer.</text>
</comment>
<comment type="subcellular location">
    <subcellularLocation>
        <location evidence="1">Cytoplasm</location>
    </subcellularLocation>
</comment>
<comment type="similarity">
    <text evidence="1">Belongs to the class-I aminoacyl-tRNA synthetase family.</text>
</comment>
<gene>
    <name evidence="1" type="primary">cysS</name>
    <name type="ordered locus">mma_2108</name>
</gene>
<feature type="chain" id="PRO_1000006591" description="Cysteine--tRNA ligase">
    <location>
        <begin position="1"/>
        <end position="464"/>
    </location>
</feature>
<feature type="short sequence motif" description="'HIGH' region">
    <location>
        <begin position="32"/>
        <end position="42"/>
    </location>
</feature>
<feature type="short sequence motif" description="'KMSKS' region">
    <location>
        <begin position="271"/>
        <end position="275"/>
    </location>
</feature>
<feature type="binding site" evidence="1">
    <location>
        <position position="30"/>
    </location>
    <ligand>
        <name>Zn(2+)</name>
        <dbReference type="ChEBI" id="CHEBI:29105"/>
    </ligand>
</feature>
<feature type="binding site" evidence="1">
    <location>
        <position position="214"/>
    </location>
    <ligand>
        <name>Zn(2+)</name>
        <dbReference type="ChEBI" id="CHEBI:29105"/>
    </ligand>
</feature>
<feature type="binding site" evidence="1">
    <location>
        <position position="239"/>
    </location>
    <ligand>
        <name>Zn(2+)</name>
        <dbReference type="ChEBI" id="CHEBI:29105"/>
    </ligand>
</feature>
<feature type="binding site" evidence="1">
    <location>
        <position position="243"/>
    </location>
    <ligand>
        <name>Zn(2+)</name>
        <dbReference type="ChEBI" id="CHEBI:29105"/>
    </ligand>
</feature>
<feature type="binding site" evidence="1">
    <location>
        <position position="274"/>
    </location>
    <ligand>
        <name>ATP</name>
        <dbReference type="ChEBI" id="CHEBI:30616"/>
    </ligand>
</feature>
<sequence>MSALKIYNTLAREKQPFTPIEPGKVRMYVCGMTVYDYCHIGHARVMVVFDLVQRWLRASGYEVNYVRNITDIDDKIIKRAAENGESISALTQRFIDAMDEDAAALGVQKPDHEPRATNYVPQMLGLIEALERNGLAYKSSDGDVNYSVRDFPGYGKLSGKSLDDLRAGERVDVNTGKRDPLDFVLWKSSKEAEPDEVKWASKWGSGRPGWHIECSAMACELLGQQFDIHGGGADLQFPHHENEIAQSEGASQHTFVNYWMHNGFVRVDNEKMSKSLGNFFTIREVLAKYDSEVVRFFILRAHYRSQLNYSDAHLDDARNALTRMYTALKGVAPDQAALDMTEAHALRFAEAMNDDFNTPLAVAVLFELANEINKTKSPALARQLVGLAGIVGLLQRPAQQFLHAGLANGEDGEMETFVVEQIEARVNAKKAKNFAEADRIRAELLEKGIILEDKPGGLTEWRRA</sequence>
<proteinExistence type="inferred from homology"/>
<evidence type="ECO:0000255" key="1">
    <source>
        <dbReference type="HAMAP-Rule" id="MF_00041"/>
    </source>
</evidence>
<keyword id="KW-0030">Aminoacyl-tRNA synthetase</keyword>
<keyword id="KW-0067">ATP-binding</keyword>
<keyword id="KW-0963">Cytoplasm</keyword>
<keyword id="KW-0436">Ligase</keyword>
<keyword id="KW-0479">Metal-binding</keyword>
<keyword id="KW-0547">Nucleotide-binding</keyword>
<keyword id="KW-0648">Protein biosynthesis</keyword>
<keyword id="KW-0862">Zinc</keyword>